<protein>
    <recommendedName>
        <fullName evidence="1">Orotidine 5'-phosphate decarboxylase</fullName>
        <ecNumber evidence="1">4.1.1.23</ecNumber>
    </recommendedName>
    <alternativeName>
        <fullName evidence="1">OMP decarboxylase</fullName>
        <shortName evidence="1">OMPDCase</shortName>
        <shortName evidence="1">OMPdecase</shortName>
    </alternativeName>
</protein>
<comment type="function">
    <text evidence="1">Catalyzes the decarboxylation of orotidine 5'-monophosphate (OMP) to uridine 5'-monophosphate (UMP).</text>
</comment>
<comment type="catalytic activity">
    <reaction evidence="1">
        <text>orotidine 5'-phosphate + H(+) = UMP + CO2</text>
        <dbReference type="Rhea" id="RHEA:11596"/>
        <dbReference type="ChEBI" id="CHEBI:15378"/>
        <dbReference type="ChEBI" id="CHEBI:16526"/>
        <dbReference type="ChEBI" id="CHEBI:57538"/>
        <dbReference type="ChEBI" id="CHEBI:57865"/>
        <dbReference type="EC" id="4.1.1.23"/>
    </reaction>
</comment>
<comment type="pathway">
    <text evidence="1">Pyrimidine metabolism; UMP biosynthesis via de novo pathway; UMP from orotate: step 2/2.</text>
</comment>
<comment type="subunit">
    <text evidence="1">Homodimer.</text>
</comment>
<comment type="similarity">
    <text evidence="1">Belongs to the OMP decarboxylase family. Type 1 subfamily.</text>
</comment>
<sequence>MTSATKTNNSGSISSPIVVALDYANKDAALAFADQVSPQDCRLKVGKEMFTLYGPELIRDLHQRGFDVFLDLKFHDIPNTTARAVAAAAELGVWMVNVHASGGARMMSAAKEALLPYGAQAPLLIAVTVLTSMDSEDLRDIGITISPAEQAERLAKLTWDCGLDGVVCSAHEAVRLKQVCGEDFSLVTPGIRPQGSEAGDQRRIMTPEQAVAVGVDYMVIGRPITQSPDPEKTLREILASLTKVA</sequence>
<dbReference type="EC" id="4.1.1.23" evidence="1"/>
<dbReference type="EMBL" id="CP001048">
    <property type="protein sequence ID" value="ACC89180.1"/>
    <property type="molecule type" value="Genomic_DNA"/>
</dbReference>
<dbReference type="RefSeq" id="WP_011192450.1">
    <property type="nucleotide sequence ID" value="NZ_CP009780.1"/>
</dbReference>
<dbReference type="SMR" id="B2K4I4"/>
<dbReference type="GeneID" id="49785855"/>
<dbReference type="KEGG" id="ypb:YPTS_2219"/>
<dbReference type="PATRIC" id="fig|502801.10.peg.1610"/>
<dbReference type="UniPathway" id="UPA00070">
    <property type="reaction ID" value="UER00120"/>
</dbReference>
<dbReference type="GO" id="GO:0005829">
    <property type="term" value="C:cytosol"/>
    <property type="evidence" value="ECO:0007669"/>
    <property type="project" value="TreeGrafter"/>
</dbReference>
<dbReference type="GO" id="GO:0004590">
    <property type="term" value="F:orotidine-5'-phosphate decarboxylase activity"/>
    <property type="evidence" value="ECO:0007669"/>
    <property type="project" value="UniProtKB-UniRule"/>
</dbReference>
<dbReference type="GO" id="GO:0006207">
    <property type="term" value="P:'de novo' pyrimidine nucleobase biosynthetic process"/>
    <property type="evidence" value="ECO:0007669"/>
    <property type="project" value="InterPro"/>
</dbReference>
<dbReference type="GO" id="GO:0044205">
    <property type="term" value="P:'de novo' UMP biosynthetic process"/>
    <property type="evidence" value="ECO:0007669"/>
    <property type="project" value="UniProtKB-UniRule"/>
</dbReference>
<dbReference type="CDD" id="cd04725">
    <property type="entry name" value="OMP_decarboxylase_like"/>
    <property type="match status" value="1"/>
</dbReference>
<dbReference type="FunFam" id="3.20.20.70:FF:000015">
    <property type="entry name" value="Orotidine 5'-phosphate decarboxylase"/>
    <property type="match status" value="1"/>
</dbReference>
<dbReference type="Gene3D" id="3.20.20.70">
    <property type="entry name" value="Aldolase class I"/>
    <property type="match status" value="1"/>
</dbReference>
<dbReference type="HAMAP" id="MF_01200_B">
    <property type="entry name" value="OMPdecase_type1_B"/>
    <property type="match status" value="1"/>
</dbReference>
<dbReference type="InterPro" id="IPR013785">
    <property type="entry name" value="Aldolase_TIM"/>
</dbReference>
<dbReference type="InterPro" id="IPR014732">
    <property type="entry name" value="OMPdecase"/>
</dbReference>
<dbReference type="InterPro" id="IPR018089">
    <property type="entry name" value="OMPdecase_AS"/>
</dbReference>
<dbReference type="InterPro" id="IPR047596">
    <property type="entry name" value="OMPdecase_bac"/>
</dbReference>
<dbReference type="InterPro" id="IPR001754">
    <property type="entry name" value="OMPdeCOase_dom"/>
</dbReference>
<dbReference type="InterPro" id="IPR011060">
    <property type="entry name" value="RibuloseP-bd_barrel"/>
</dbReference>
<dbReference type="NCBIfam" id="NF001273">
    <property type="entry name" value="PRK00230.1"/>
    <property type="match status" value="1"/>
</dbReference>
<dbReference type="NCBIfam" id="TIGR01740">
    <property type="entry name" value="pyrF"/>
    <property type="match status" value="1"/>
</dbReference>
<dbReference type="PANTHER" id="PTHR32119">
    <property type="entry name" value="OROTIDINE 5'-PHOSPHATE DECARBOXYLASE"/>
    <property type="match status" value="1"/>
</dbReference>
<dbReference type="PANTHER" id="PTHR32119:SF2">
    <property type="entry name" value="OROTIDINE 5'-PHOSPHATE DECARBOXYLASE"/>
    <property type="match status" value="1"/>
</dbReference>
<dbReference type="Pfam" id="PF00215">
    <property type="entry name" value="OMPdecase"/>
    <property type="match status" value="1"/>
</dbReference>
<dbReference type="SMART" id="SM00934">
    <property type="entry name" value="OMPdecase"/>
    <property type="match status" value="1"/>
</dbReference>
<dbReference type="SUPFAM" id="SSF51366">
    <property type="entry name" value="Ribulose-phoshate binding barrel"/>
    <property type="match status" value="1"/>
</dbReference>
<dbReference type="PROSITE" id="PS00156">
    <property type="entry name" value="OMPDECASE"/>
    <property type="match status" value="1"/>
</dbReference>
<organism>
    <name type="scientific">Yersinia pseudotuberculosis serotype IB (strain PB1/+)</name>
    <dbReference type="NCBI Taxonomy" id="502801"/>
    <lineage>
        <taxon>Bacteria</taxon>
        <taxon>Pseudomonadati</taxon>
        <taxon>Pseudomonadota</taxon>
        <taxon>Gammaproteobacteria</taxon>
        <taxon>Enterobacterales</taxon>
        <taxon>Yersiniaceae</taxon>
        <taxon>Yersinia</taxon>
    </lineage>
</organism>
<evidence type="ECO:0000255" key="1">
    <source>
        <dbReference type="HAMAP-Rule" id="MF_01200"/>
    </source>
</evidence>
<keyword id="KW-0210">Decarboxylase</keyword>
<keyword id="KW-0456">Lyase</keyword>
<keyword id="KW-0665">Pyrimidine biosynthesis</keyword>
<name>PYRF_YERPB</name>
<reference key="1">
    <citation type="submission" date="2008-04" db="EMBL/GenBank/DDBJ databases">
        <title>Complete sequence of Yersinia pseudotuberculosis PB1/+.</title>
        <authorList>
            <person name="Copeland A."/>
            <person name="Lucas S."/>
            <person name="Lapidus A."/>
            <person name="Glavina del Rio T."/>
            <person name="Dalin E."/>
            <person name="Tice H."/>
            <person name="Bruce D."/>
            <person name="Goodwin L."/>
            <person name="Pitluck S."/>
            <person name="Munk A.C."/>
            <person name="Brettin T."/>
            <person name="Detter J.C."/>
            <person name="Han C."/>
            <person name="Tapia R."/>
            <person name="Schmutz J."/>
            <person name="Larimer F."/>
            <person name="Land M."/>
            <person name="Hauser L."/>
            <person name="Challacombe J.F."/>
            <person name="Green L."/>
            <person name="Lindler L.E."/>
            <person name="Nikolich M.P."/>
            <person name="Richardson P."/>
        </authorList>
    </citation>
    <scope>NUCLEOTIDE SEQUENCE [LARGE SCALE GENOMIC DNA]</scope>
    <source>
        <strain>PB1/+</strain>
    </source>
</reference>
<proteinExistence type="inferred from homology"/>
<gene>
    <name evidence="1" type="primary">pyrF</name>
    <name type="ordered locus">YPTS_2219</name>
</gene>
<accession>B2K4I4</accession>
<feature type="chain" id="PRO_1000138574" description="Orotidine 5'-phosphate decarboxylase">
    <location>
        <begin position="1"/>
        <end position="245"/>
    </location>
</feature>
<feature type="active site" description="Proton donor" evidence="1">
    <location>
        <position position="73"/>
    </location>
</feature>
<feature type="binding site" evidence="1">
    <location>
        <position position="22"/>
    </location>
    <ligand>
        <name>substrate</name>
    </ligand>
</feature>
<feature type="binding site" evidence="1">
    <location>
        <position position="44"/>
    </location>
    <ligand>
        <name>substrate</name>
    </ligand>
</feature>
<feature type="binding site" evidence="1">
    <location>
        <begin position="71"/>
        <end position="80"/>
    </location>
    <ligand>
        <name>substrate</name>
    </ligand>
</feature>
<feature type="binding site" evidence="1">
    <location>
        <position position="131"/>
    </location>
    <ligand>
        <name>substrate</name>
    </ligand>
</feature>
<feature type="binding site" evidence="1">
    <location>
        <position position="192"/>
    </location>
    <ligand>
        <name>substrate</name>
    </ligand>
</feature>
<feature type="binding site" evidence="1">
    <location>
        <position position="201"/>
    </location>
    <ligand>
        <name>substrate</name>
    </ligand>
</feature>
<feature type="binding site" evidence="1">
    <location>
        <position position="221"/>
    </location>
    <ligand>
        <name>substrate</name>
    </ligand>
</feature>
<feature type="binding site" evidence="1">
    <location>
        <position position="222"/>
    </location>
    <ligand>
        <name>substrate</name>
    </ligand>
</feature>